<keyword id="KW-0472">Membrane</keyword>
<keyword id="KW-1185">Reference proteome</keyword>
<keyword id="KW-0812">Transmembrane</keyword>
<keyword id="KW-1133">Transmembrane helix</keyword>
<comment type="subcellular location">
    <subcellularLocation>
        <location evidence="2">Membrane</location>
        <topology evidence="2">Multi-pass membrane protein</topology>
    </subcellularLocation>
</comment>
<comment type="similarity">
    <text evidence="2">Belongs to the UPF0479 family.</text>
</comment>
<name>YG296_YEAST</name>
<sequence>MMPAKLQLDVLRTLQSSARHGTQTLKNSNFLERFHKDRIVFCLPFFPALFFVPVQKVLQHLCLRFTQVAPYFIIQLFDLPSRHAENLAPLLASCRIQYTNCFSSSSNGQVPSIISLYLRVDLSPFYAKIFQISYRVPMIWLDVFQVFFVFLVISQHSLHS</sequence>
<feature type="chain" id="PRO_0000410453" description="UPF0479 membrane protein YGR296C-B">
    <location>
        <begin position="1"/>
        <end position="160"/>
    </location>
</feature>
<feature type="transmembrane region" description="Helical" evidence="1">
    <location>
        <begin position="39"/>
        <end position="59"/>
    </location>
</feature>
<feature type="transmembrane region" description="Helical" evidence="1">
    <location>
        <begin position="136"/>
        <end position="156"/>
    </location>
</feature>
<gene>
    <name type="ordered locus">YGR296C-B</name>
</gene>
<reference key="1">
    <citation type="journal article" date="1997" name="Nature">
        <title>The nucleotide sequence of Saccharomyces cerevisiae chromosome VII.</title>
        <authorList>
            <person name="Tettelin H."/>
            <person name="Agostoni-Carbone M.L."/>
            <person name="Albermann K."/>
            <person name="Albers M."/>
            <person name="Arroyo J."/>
            <person name="Backes U."/>
            <person name="Barreiros T."/>
            <person name="Bertani I."/>
            <person name="Bjourson A.J."/>
            <person name="Brueckner M."/>
            <person name="Bruschi C.V."/>
            <person name="Carignani G."/>
            <person name="Castagnoli L."/>
            <person name="Cerdan E."/>
            <person name="Clemente M.L."/>
            <person name="Coblenz A."/>
            <person name="Coglievina M."/>
            <person name="Coissac E."/>
            <person name="Defoor E."/>
            <person name="Del Bino S."/>
            <person name="Delius H."/>
            <person name="Delneri D."/>
            <person name="de Wergifosse P."/>
            <person name="Dujon B."/>
            <person name="Durand P."/>
            <person name="Entian K.-D."/>
            <person name="Eraso P."/>
            <person name="Escribano V."/>
            <person name="Fabiani L."/>
            <person name="Fartmann B."/>
            <person name="Feroli F."/>
            <person name="Feuermann M."/>
            <person name="Frontali L."/>
            <person name="Garcia-Gonzalez M."/>
            <person name="Garcia-Saez M.I."/>
            <person name="Goffeau A."/>
            <person name="Guerreiro P."/>
            <person name="Hani J."/>
            <person name="Hansen M."/>
            <person name="Hebling U."/>
            <person name="Hernandez K."/>
            <person name="Heumann K."/>
            <person name="Hilger F."/>
            <person name="Hofmann B."/>
            <person name="Indge K.J."/>
            <person name="James C.M."/>
            <person name="Klima R."/>
            <person name="Koetter P."/>
            <person name="Kramer B."/>
            <person name="Kramer W."/>
            <person name="Lauquin G."/>
            <person name="Leuther H."/>
            <person name="Louis E.J."/>
            <person name="Maillier E."/>
            <person name="Marconi A."/>
            <person name="Martegani E."/>
            <person name="Mazon M.J."/>
            <person name="Mazzoni C."/>
            <person name="McReynolds A.D.K."/>
            <person name="Melchioretto P."/>
            <person name="Mewes H.-W."/>
            <person name="Minenkova O."/>
            <person name="Mueller-Auer S."/>
            <person name="Nawrocki A."/>
            <person name="Netter P."/>
            <person name="Neu R."/>
            <person name="Nombela C."/>
            <person name="Oliver S.G."/>
            <person name="Panzeri L."/>
            <person name="Paoluzi S."/>
            <person name="Plevani P."/>
            <person name="Portetelle D."/>
            <person name="Portillo F."/>
            <person name="Potier S."/>
            <person name="Purnelle B."/>
            <person name="Rieger M."/>
            <person name="Riles L."/>
            <person name="Rinaldi T."/>
            <person name="Robben J."/>
            <person name="Rodrigues-Pousada C."/>
            <person name="Rodriguez-Belmonte E."/>
            <person name="Rodriguez-Torres A.M."/>
            <person name="Rose M."/>
            <person name="Ruzzi M."/>
            <person name="Saliola M."/>
            <person name="Sanchez-Perez M."/>
            <person name="Schaefer B."/>
            <person name="Schaefer M."/>
            <person name="Scharfe M."/>
            <person name="Schmidheini T."/>
            <person name="Schreer A."/>
            <person name="Skala J."/>
            <person name="Souciet J.-L."/>
            <person name="Steensma H.Y."/>
            <person name="Talla E."/>
            <person name="Thierry A."/>
            <person name="Vandenbol M."/>
            <person name="van der Aart Q.J.M."/>
            <person name="Van Dyck L."/>
            <person name="Vanoni M."/>
            <person name="Verhasselt P."/>
            <person name="Voet M."/>
            <person name="Volckaert G."/>
            <person name="Wambutt R."/>
            <person name="Watson M.D."/>
            <person name="Weber N."/>
            <person name="Wedler E."/>
            <person name="Wedler H."/>
            <person name="Wipfli P."/>
            <person name="Wolf K."/>
            <person name="Wright L.F."/>
            <person name="Zaccaria P."/>
            <person name="Zimmermann M."/>
            <person name="Zollner A."/>
            <person name="Kleine K."/>
        </authorList>
    </citation>
    <scope>NUCLEOTIDE SEQUENCE [LARGE SCALE GENOMIC DNA]</scope>
    <source>
        <strain>ATCC 204508 / S288c</strain>
    </source>
</reference>
<reference key="2">
    <citation type="journal article" date="2014" name="G3 (Bethesda)">
        <title>The reference genome sequence of Saccharomyces cerevisiae: Then and now.</title>
        <authorList>
            <person name="Engel S.R."/>
            <person name="Dietrich F.S."/>
            <person name="Fisk D.G."/>
            <person name="Binkley G."/>
            <person name="Balakrishnan R."/>
            <person name="Costanzo M.C."/>
            <person name="Dwight S.S."/>
            <person name="Hitz B.C."/>
            <person name="Karra K."/>
            <person name="Nash R.S."/>
            <person name="Weng S."/>
            <person name="Wong E.D."/>
            <person name="Lloyd P."/>
            <person name="Skrzypek M.S."/>
            <person name="Miyasato S.R."/>
            <person name="Simison M."/>
            <person name="Cherry J.M."/>
        </authorList>
    </citation>
    <scope>GENOME REANNOTATION</scope>
    <source>
        <strain>ATCC 204508 / S288c</strain>
    </source>
</reference>
<reference key="3">
    <citation type="journal article" date="2002" name="Nat. Biotechnol.">
        <title>An integrated approach for finding overlooked genes in yeast.</title>
        <authorList>
            <person name="Kumar A."/>
            <person name="Harrison P.M."/>
            <person name="Cheung K.-H."/>
            <person name="Lan N."/>
            <person name="Echols N."/>
            <person name="Bertone P."/>
            <person name="Miller P."/>
            <person name="Gerstein M.B."/>
            <person name="Snyder M."/>
        </authorList>
    </citation>
    <scope>NUCLEOTIDE SEQUENCE [GENOMIC DNA]</scope>
</reference>
<dbReference type="EMBL" id="Z73081">
    <property type="status" value="NOT_ANNOTATED_CDS"/>
    <property type="molecule type" value="Genomic_DNA"/>
</dbReference>
<dbReference type="EMBL" id="AF479993">
    <property type="protein sequence ID" value="AAL79306.1"/>
    <property type="molecule type" value="Genomic_DNA"/>
</dbReference>
<dbReference type="EMBL" id="BK006941">
    <property type="status" value="NOT_ANNOTATED_CDS"/>
    <property type="molecule type" value="Genomic_DNA"/>
</dbReference>
<dbReference type="RefSeq" id="NP_001073292.1">
    <property type="nucleotide sequence ID" value="NM_001184590.1"/>
</dbReference>
<dbReference type="FunCoup" id="P0CX96">
    <property type="interactions" value="3"/>
</dbReference>
<dbReference type="EnsemblFungi" id="YER190C-B_mRNA">
    <property type="protein sequence ID" value="YER190C-B"/>
    <property type="gene ID" value="YER190C-B"/>
</dbReference>
<dbReference type="EnsemblFungi" id="YGR296C-B_mRNA">
    <property type="protein sequence ID" value="YGR296C-B"/>
    <property type="gene ID" value="YGR296C-B"/>
</dbReference>
<dbReference type="EnsemblFungi" id="YPL283W-B_mRNA">
    <property type="protein sequence ID" value="YPL283W-B"/>
    <property type="gene ID" value="YPL283W-B"/>
</dbReference>
<dbReference type="EnsemblFungi" id="YPR204C-A_mRNA">
    <property type="protein sequence ID" value="YPR204C-A"/>
    <property type="gene ID" value="YPR204C-A"/>
</dbReference>
<dbReference type="KEGG" id="sce:YER190C-B"/>
<dbReference type="AGR" id="SGD:S000028643"/>
<dbReference type="SGD" id="S000028643">
    <property type="gene designation" value="YGR296C-B"/>
</dbReference>
<dbReference type="VEuPathDB" id="FungiDB:YER190C-B"/>
<dbReference type="HOGENOM" id="CLU_139933_0_0_1"/>
<dbReference type="InParanoid" id="P0CX96"/>
<dbReference type="PRO" id="PR:P0CX96"/>
<dbReference type="Proteomes" id="UP000002311">
    <property type="component" value="Chromosome VII"/>
</dbReference>
<dbReference type="RNAct" id="P0CX96">
    <property type="molecule type" value="protein"/>
</dbReference>
<dbReference type="GO" id="GO:0016020">
    <property type="term" value="C:membrane"/>
    <property type="evidence" value="ECO:0007669"/>
    <property type="project" value="UniProtKB-SubCell"/>
</dbReference>
<evidence type="ECO:0000255" key="1"/>
<evidence type="ECO:0000305" key="2"/>
<accession>P0CX96</accession>
<accession>D3DMA0</accession>
<accession>Q8TFA4</accession>
<proteinExistence type="inferred from homology"/>
<protein>
    <recommendedName>
        <fullName>UPF0479 membrane protein YGR296C-B</fullName>
    </recommendedName>
</protein>
<organism>
    <name type="scientific">Saccharomyces cerevisiae (strain ATCC 204508 / S288c)</name>
    <name type="common">Baker's yeast</name>
    <dbReference type="NCBI Taxonomy" id="559292"/>
    <lineage>
        <taxon>Eukaryota</taxon>
        <taxon>Fungi</taxon>
        <taxon>Dikarya</taxon>
        <taxon>Ascomycota</taxon>
        <taxon>Saccharomycotina</taxon>
        <taxon>Saccharomycetes</taxon>
        <taxon>Saccharomycetales</taxon>
        <taxon>Saccharomycetaceae</taxon>
        <taxon>Saccharomyces</taxon>
    </lineage>
</organism>